<accession>P43199</accession>
<organism>
    <name type="scientific">Aethia psittacula</name>
    <name type="common">Parakeet auklet</name>
    <name type="synonym">Cyclorrhynchus psittacula</name>
    <dbReference type="NCBI Taxonomy" id="28699"/>
    <lineage>
        <taxon>Eukaryota</taxon>
        <taxon>Metazoa</taxon>
        <taxon>Chordata</taxon>
        <taxon>Craniata</taxon>
        <taxon>Vertebrata</taxon>
        <taxon>Euteleostomi</taxon>
        <taxon>Archelosauria</taxon>
        <taxon>Archosauria</taxon>
        <taxon>Dinosauria</taxon>
        <taxon>Saurischia</taxon>
        <taxon>Theropoda</taxon>
        <taxon>Coelurosauria</taxon>
        <taxon>Aves</taxon>
        <taxon>Neognathae</taxon>
        <taxon>Neoaves</taxon>
        <taxon>Charadriiformes</taxon>
        <taxon>Alcidae</taxon>
        <taxon>Aethia</taxon>
    </lineage>
</organism>
<name>NU6M_AETPS</name>
<sequence>MTYFVLFLGLCFVLGGLAVASNPSPYYGVVGLVLASVAGCGWLLSLGVSFVSLVLFMVYLGGMLVVFVYSVSLAADPFPEAWGDWGVVGYGVGFVVVLVAGLIVGGSIGSLDFGVVTVDSVGMFSVRLDFGGVAMFYSCGVGMLLVAGWGLLLTLFVVLELVRGLSRGAIRAV</sequence>
<protein>
    <recommendedName>
        <fullName>NADH-ubiquinone oxidoreductase chain 6</fullName>
        <ecNumber>7.1.1.2</ecNumber>
    </recommendedName>
    <alternativeName>
        <fullName>NADH dehydrogenase subunit 6</fullName>
    </alternativeName>
</protein>
<gene>
    <name type="primary">MT-ND6</name>
    <name type="synonym">MTND6</name>
    <name type="synonym">NADH6</name>
    <name type="synonym">ND6</name>
</gene>
<geneLocation type="mitochondrion"/>
<proteinExistence type="inferred from homology"/>
<reference key="1">
    <citation type="journal article" date="1994" name="Curr. Genet.">
        <title>Intragenic rearrangements in the mitochondrial NADH dehydrogenase subunit 6 gene of vertebrates.</title>
        <authorList>
            <person name="Moum T."/>
            <person name="Willassen N.P."/>
            <person name="Johansen S."/>
        </authorList>
    </citation>
    <scope>NUCLEOTIDE SEQUENCE [GENOMIC DNA]</scope>
</reference>
<evidence type="ECO:0000250" key="1"/>
<evidence type="ECO:0000255" key="2"/>
<evidence type="ECO:0000305" key="3"/>
<keyword id="KW-0249">Electron transport</keyword>
<keyword id="KW-0472">Membrane</keyword>
<keyword id="KW-0496">Mitochondrion</keyword>
<keyword id="KW-0520">NAD</keyword>
<keyword id="KW-0679">Respiratory chain</keyword>
<keyword id="KW-1278">Translocase</keyword>
<keyword id="KW-0812">Transmembrane</keyword>
<keyword id="KW-1133">Transmembrane helix</keyword>
<keyword id="KW-0813">Transport</keyword>
<keyword id="KW-0830">Ubiquinone</keyword>
<comment type="function">
    <text evidence="1">Core subunit of the mitochondrial membrane respiratory chain NADH dehydrogenase (Complex I) that is believed to belong to the minimal assembly required for catalysis. Complex I functions in the transfer of electrons from NADH to the respiratory chain. The immediate electron acceptor for the enzyme is believed to be ubiquinone (By similarity).</text>
</comment>
<comment type="catalytic activity">
    <reaction>
        <text>a ubiquinone + NADH + 5 H(+)(in) = a ubiquinol + NAD(+) + 4 H(+)(out)</text>
        <dbReference type="Rhea" id="RHEA:29091"/>
        <dbReference type="Rhea" id="RHEA-COMP:9565"/>
        <dbReference type="Rhea" id="RHEA-COMP:9566"/>
        <dbReference type="ChEBI" id="CHEBI:15378"/>
        <dbReference type="ChEBI" id="CHEBI:16389"/>
        <dbReference type="ChEBI" id="CHEBI:17976"/>
        <dbReference type="ChEBI" id="CHEBI:57540"/>
        <dbReference type="ChEBI" id="CHEBI:57945"/>
        <dbReference type="EC" id="7.1.1.2"/>
    </reaction>
</comment>
<comment type="subcellular location">
    <subcellularLocation>
        <location evidence="3">Mitochondrion membrane</location>
        <topology evidence="3">Multi-pass membrane protein</topology>
    </subcellularLocation>
</comment>
<comment type="similarity">
    <text evidence="3">Belongs to the complex I subunit 6 family.</text>
</comment>
<dbReference type="EC" id="7.1.1.2"/>
<dbReference type="EMBL" id="X73925">
    <property type="protein sequence ID" value="CAA52130.1"/>
    <property type="molecule type" value="Genomic_DNA"/>
</dbReference>
<dbReference type="PIR" id="S44406">
    <property type="entry name" value="S44406"/>
</dbReference>
<dbReference type="SMR" id="P43199"/>
<dbReference type="GO" id="GO:0031966">
    <property type="term" value="C:mitochondrial membrane"/>
    <property type="evidence" value="ECO:0007669"/>
    <property type="project" value="UniProtKB-SubCell"/>
</dbReference>
<dbReference type="GO" id="GO:0008137">
    <property type="term" value="F:NADH dehydrogenase (ubiquinone) activity"/>
    <property type="evidence" value="ECO:0007669"/>
    <property type="project" value="UniProtKB-EC"/>
</dbReference>
<dbReference type="Gene3D" id="1.20.120.1200">
    <property type="entry name" value="NADH-ubiquinone/plastoquinone oxidoreductase chain 6, subunit NuoJ"/>
    <property type="match status" value="1"/>
</dbReference>
<dbReference type="InterPro" id="IPR050269">
    <property type="entry name" value="ComplexI_Subunit6"/>
</dbReference>
<dbReference type="InterPro" id="IPR001457">
    <property type="entry name" value="NADH_UbQ/plastoQ_OxRdtase_su6"/>
</dbReference>
<dbReference type="InterPro" id="IPR042106">
    <property type="entry name" value="Nuo/plastoQ_OxRdtase_6_NuoJ"/>
</dbReference>
<dbReference type="PANTHER" id="PTHR11435">
    <property type="entry name" value="NADH UBIQUINONE OXIDOREDUCTASE SUBUNIT ND6"/>
    <property type="match status" value="1"/>
</dbReference>
<dbReference type="PANTHER" id="PTHR11435:SF1">
    <property type="entry name" value="NADH-UBIQUINONE OXIDOREDUCTASE CHAIN 6"/>
    <property type="match status" value="1"/>
</dbReference>
<dbReference type="Pfam" id="PF00499">
    <property type="entry name" value="Oxidored_q3"/>
    <property type="match status" value="1"/>
</dbReference>
<feature type="chain" id="PRO_0000118272" description="NADH-ubiquinone oxidoreductase chain 6">
    <location>
        <begin position="1"/>
        <end position="173"/>
    </location>
</feature>
<feature type="transmembrane region" description="Helical" evidence="2">
    <location>
        <begin position="1"/>
        <end position="21"/>
    </location>
</feature>
<feature type="transmembrane region" description="Helical" evidence="2">
    <location>
        <begin position="27"/>
        <end position="47"/>
    </location>
</feature>
<feature type="transmembrane region" description="Helical" evidence="2">
    <location>
        <begin position="48"/>
        <end position="68"/>
    </location>
</feature>
<feature type="transmembrane region" description="Helical" evidence="2">
    <location>
        <begin position="85"/>
        <end position="105"/>
    </location>
</feature>
<feature type="transmembrane region" description="Helical" evidence="2">
    <location>
        <begin position="106"/>
        <end position="126"/>
    </location>
</feature>
<feature type="transmembrane region" description="Helical" evidence="2">
    <location>
        <begin position="139"/>
        <end position="159"/>
    </location>
</feature>